<keyword id="KW-0238">DNA-binding</keyword>
<keyword id="KW-0539">Nucleus</keyword>
<keyword id="KW-1185">Reference proteome</keyword>
<keyword id="KW-0804">Transcription</keyword>
<keyword id="KW-0805">Transcription regulation</keyword>
<protein>
    <recommendedName>
        <fullName evidence="3">Heat shock transcription factor, X-linked member 4</fullName>
    </recommendedName>
</protein>
<feature type="chain" id="PRO_0000440584" description="Heat shock transcription factor, X-linked member 4">
    <location>
        <begin position="1"/>
        <end position="333"/>
    </location>
</feature>
<feature type="DNA-binding region" evidence="1">
    <location>
        <begin position="79"/>
        <end position="182"/>
    </location>
</feature>
<feature type="region of interest" description="Disordered" evidence="2">
    <location>
        <begin position="1"/>
        <end position="66"/>
    </location>
</feature>
<feature type="region of interest" description="Disordered" evidence="2">
    <location>
        <begin position="227"/>
        <end position="275"/>
    </location>
</feature>
<feature type="compositionally biased region" description="Low complexity" evidence="2">
    <location>
        <begin position="29"/>
        <end position="39"/>
    </location>
</feature>
<feature type="compositionally biased region" description="Polar residues" evidence="2">
    <location>
        <begin position="49"/>
        <end position="60"/>
    </location>
</feature>
<feature type="compositionally biased region" description="Polar residues" evidence="2">
    <location>
        <begin position="228"/>
        <end position="242"/>
    </location>
</feature>
<gene>
    <name evidence="4" type="primary">HSFX4</name>
</gene>
<sequence length="333" mass="37155">MASQNTEQEYEAKLAPSVGGEPTSGGPSGSSPDPNPDSSEVLDRHEDQAMSQDPGSQDNSPPEDRNQRVVNVEDNHNLFRLSFPRKLWTIVEEDTFKSVSWNDDGDAVIIDKDLFQREVLQRKGAERIFKTDNLTSFIRQLNLYGFCKTRPSNSPGNKKMMIYCNSNFQRDKPRLLENIQRKDALRNTAQQATRVPTPKRKNLVATRRSLRIYHINARKEAIKMCQQGAPSVQGPSGTQSFRRSGMWSKKSATRHPLGNGPPQEPNGPSWEGTSGNVTFTSSATTWMEGTGILSSLVYSDNGSVMSLYNICYYALLASLSVMSPNEPSDDEEE</sequence>
<comment type="subcellular location">
    <subcellularLocation>
        <location evidence="3">Nucleus</location>
    </subcellularLocation>
</comment>
<comment type="similarity">
    <text evidence="3">Belongs to the HSF family.</text>
</comment>
<dbReference type="EMBL" id="AC244099">
    <property type="status" value="NOT_ANNOTATED_CDS"/>
    <property type="molecule type" value="Genomic_DNA"/>
</dbReference>
<dbReference type="CCDS" id="CCDS87786.1"/>
<dbReference type="RefSeq" id="NP_001338043.1">
    <property type="nucleotide sequence ID" value="NM_001351114.2"/>
</dbReference>
<dbReference type="RefSeq" id="XP_005274830.1">
    <property type="nucleotide sequence ID" value="XM_005274773.4"/>
</dbReference>
<dbReference type="RefSeq" id="XP_005276778.1">
    <property type="nucleotide sequence ID" value="XM_005276721.4"/>
</dbReference>
<dbReference type="SMR" id="A0A1B0GTS1"/>
<dbReference type="FunCoup" id="A0A1B0GTS1">
    <property type="interactions" value="48"/>
</dbReference>
<dbReference type="STRING" id="9606.ENSP00000489814"/>
<dbReference type="BioMuta" id="HSFX4"/>
<dbReference type="MassIVE" id="A0A1B0GTS1"/>
<dbReference type="PeptideAtlas" id="A0A1B0GTS1"/>
<dbReference type="Ensembl" id="ENST00000457775.3">
    <property type="protein sequence ID" value="ENSP00000489814.2"/>
    <property type="gene ID" value="ENSG00000283463.2"/>
</dbReference>
<dbReference type="GeneID" id="101927685"/>
<dbReference type="MANE-Select" id="ENST00000457775.3">
    <property type="protein sequence ID" value="ENSP00000489814.2"/>
    <property type="RefSeq nucleotide sequence ID" value="NM_001351114.2"/>
    <property type="RefSeq protein sequence ID" value="NP_001338043.1"/>
</dbReference>
<dbReference type="AGR" id="HGNC:52398"/>
<dbReference type="GeneCards" id="HSFX4"/>
<dbReference type="HGNC" id="HGNC:52398">
    <property type="gene designation" value="HSFX4"/>
</dbReference>
<dbReference type="HPA" id="ENSG00000283463">
    <property type="expression patterns" value="Tissue enriched (testis)"/>
</dbReference>
<dbReference type="neXtProt" id="NX_A0A1B0GTS1"/>
<dbReference type="VEuPathDB" id="HostDB:ENSG00000283463"/>
<dbReference type="GeneTree" id="ENSGT00940000161825"/>
<dbReference type="InParanoid" id="A0A1B0GTS1"/>
<dbReference type="OMA" id="GNRIMIY"/>
<dbReference type="OrthoDB" id="6418155at2759"/>
<dbReference type="PAN-GO" id="A0A1B0GTS1">
    <property type="GO annotations" value="4 GO annotations based on evolutionary models"/>
</dbReference>
<dbReference type="BioGRID-ORCS" id="101927685">
    <property type="hits" value="0 hits in 1 CRISPR screen"/>
</dbReference>
<dbReference type="GenomeRNAi" id="101927685"/>
<dbReference type="Pharos" id="A0A1B0GTS1">
    <property type="development level" value="Tdark"/>
</dbReference>
<dbReference type="PRO" id="PR:A0A1B0GTS1"/>
<dbReference type="Proteomes" id="UP000005640">
    <property type="component" value="Chromosome X"/>
</dbReference>
<dbReference type="RNAct" id="A0A1B0GTS1">
    <property type="molecule type" value="protein"/>
</dbReference>
<dbReference type="Bgee" id="ENSG00000283463">
    <property type="expression patterns" value="Expressed in male germ line stem cell (sensu Vertebrata) in testis and 76 other cell types or tissues"/>
</dbReference>
<dbReference type="GO" id="GO:0005634">
    <property type="term" value="C:nucleus"/>
    <property type="evidence" value="ECO:0007669"/>
    <property type="project" value="UniProtKB-SubCell"/>
</dbReference>
<dbReference type="GO" id="GO:0003700">
    <property type="term" value="F:DNA-binding transcription factor activity"/>
    <property type="evidence" value="ECO:0007669"/>
    <property type="project" value="InterPro"/>
</dbReference>
<dbReference type="GO" id="GO:0043565">
    <property type="term" value="F:sequence-specific DNA binding"/>
    <property type="evidence" value="ECO:0007669"/>
    <property type="project" value="InterPro"/>
</dbReference>
<dbReference type="FunFam" id="1.10.10.10:FF:000349">
    <property type="entry name" value="Heat shock transcription factor, Y-linked"/>
    <property type="match status" value="1"/>
</dbReference>
<dbReference type="Gene3D" id="1.10.10.10">
    <property type="entry name" value="Winged helix-like DNA-binding domain superfamily/Winged helix DNA-binding domain"/>
    <property type="match status" value="1"/>
</dbReference>
<dbReference type="InterPro" id="IPR000232">
    <property type="entry name" value="HSF_DNA-bd"/>
</dbReference>
<dbReference type="InterPro" id="IPR036388">
    <property type="entry name" value="WH-like_DNA-bd_sf"/>
</dbReference>
<dbReference type="InterPro" id="IPR036390">
    <property type="entry name" value="WH_DNA-bd_sf"/>
</dbReference>
<dbReference type="PANTHER" id="PTHR10015">
    <property type="entry name" value="HEAT SHOCK TRANSCRIPTION FACTOR"/>
    <property type="match status" value="1"/>
</dbReference>
<dbReference type="PANTHER" id="PTHR10015:SF140">
    <property type="entry name" value="HEAT SHOCK TRANSCRIPTION FACTOR, X-LINKED MEMBER 3-RELATED"/>
    <property type="match status" value="1"/>
</dbReference>
<dbReference type="Pfam" id="PF00447">
    <property type="entry name" value="HSF_DNA-bind"/>
    <property type="match status" value="1"/>
</dbReference>
<dbReference type="SMART" id="SM00415">
    <property type="entry name" value="HSF"/>
    <property type="match status" value="1"/>
</dbReference>
<dbReference type="SUPFAM" id="SSF46785">
    <property type="entry name" value="Winged helix' DNA-binding domain"/>
    <property type="match status" value="1"/>
</dbReference>
<name>HSFX4_HUMAN</name>
<accession>A0A1B0GTS1</accession>
<organism>
    <name type="scientific">Homo sapiens</name>
    <name type="common">Human</name>
    <dbReference type="NCBI Taxonomy" id="9606"/>
    <lineage>
        <taxon>Eukaryota</taxon>
        <taxon>Metazoa</taxon>
        <taxon>Chordata</taxon>
        <taxon>Craniata</taxon>
        <taxon>Vertebrata</taxon>
        <taxon>Euteleostomi</taxon>
        <taxon>Mammalia</taxon>
        <taxon>Eutheria</taxon>
        <taxon>Euarchontoglires</taxon>
        <taxon>Primates</taxon>
        <taxon>Haplorrhini</taxon>
        <taxon>Catarrhini</taxon>
        <taxon>Hominidae</taxon>
        <taxon>Homo</taxon>
    </lineage>
</organism>
<reference key="1">
    <citation type="journal article" date="2005" name="Nature">
        <title>The DNA sequence of the human X chromosome.</title>
        <authorList>
            <person name="Ross M.T."/>
            <person name="Grafham D.V."/>
            <person name="Coffey A.J."/>
            <person name="Scherer S."/>
            <person name="McLay K."/>
            <person name="Muzny D."/>
            <person name="Platzer M."/>
            <person name="Howell G.R."/>
            <person name="Burrows C."/>
            <person name="Bird C.P."/>
            <person name="Frankish A."/>
            <person name="Lovell F.L."/>
            <person name="Howe K.L."/>
            <person name="Ashurst J.L."/>
            <person name="Fulton R.S."/>
            <person name="Sudbrak R."/>
            <person name="Wen G."/>
            <person name="Jones M.C."/>
            <person name="Hurles M.E."/>
            <person name="Andrews T.D."/>
            <person name="Scott C.E."/>
            <person name="Searle S."/>
            <person name="Ramser J."/>
            <person name="Whittaker A."/>
            <person name="Deadman R."/>
            <person name="Carter N.P."/>
            <person name="Hunt S.E."/>
            <person name="Chen R."/>
            <person name="Cree A."/>
            <person name="Gunaratne P."/>
            <person name="Havlak P."/>
            <person name="Hodgson A."/>
            <person name="Metzker M.L."/>
            <person name="Richards S."/>
            <person name="Scott G."/>
            <person name="Steffen D."/>
            <person name="Sodergren E."/>
            <person name="Wheeler D.A."/>
            <person name="Worley K.C."/>
            <person name="Ainscough R."/>
            <person name="Ambrose K.D."/>
            <person name="Ansari-Lari M.A."/>
            <person name="Aradhya S."/>
            <person name="Ashwell R.I."/>
            <person name="Babbage A.K."/>
            <person name="Bagguley C.L."/>
            <person name="Ballabio A."/>
            <person name="Banerjee R."/>
            <person name="Barker G.E."/>
            <person name="Barlow K.F."/>
            <person name="Barrett I.P."/>
            <person name="Bates K.N."/>
            <person name="Beare D.M."/>
            <person name="Beasley H."/>
            <person name="Beasley O."/>
            <person name="Beck A."/>
            <person name="Bethel G."/>
            <person name="Blechschmidt K."/>
            <person name="Brady N."/>
            <person name="Bray-Allen S."/>
            <person name="Bridgeman A.M."/>
            <person name="Brown A.J."/>
            <person name="Brown M.J."/>
            <person name="Bonnin D."/>
            <person name="Bruford E.A."/>
            <person name="Buhay C."/>
            <person name="Burch P."/>
            <person name="Burford D."/>
            <person name="Burgess J."/>
            <person name="Burrill W."/>
            <person name="Burton J."/>
            <person name="Bye J.M."/>
            <person name="Carder C."/>
            <person name="Carrel L."/>
            <person name="Chako J."/>
            <person name="Chapman J.C."/>
            <person name="Chavez D."/>
            <person name="Chen E."/>
            <person name="Chen G."/>
            <person name="Chen Y."/>
            <person name="Chen Z."/>
            <person name="Chinault C."/>
            <person name="Ciccodicola A."/>
            <person name="Clark S.Y."/>
            <person name="Clarke G."/>
            <person name="Clee C.M."/>
            <person name="Clegg S."/>
            <person name="Clerc-Blankenburg K."/>
            <person name="Clifford K."/>
            <person name="Cobley V."/>
            <person name="Cole C.G."/>
            <person name="Conquer J.S."/>
            <person name="Corby N."/>
            <person name="Connor R.E."/>
            <person name="David R."/>
            <person name="Davies J."/>
            <person name="Davis C."/>
            <person name="Davis J."/>
            <person name="Delgado O."/>
            <person name="Deshazo D."/>
            <person name="Dhami P."/>
            <person name="Ding Y."/>
            <person name="Dinh H."/>
            <person name="Dodsworth S."/>
            <person name="Draper H."/>
            <person name="Dugan-Rocha S."/>
            <person name="Dunham A."/>
            <person name="Dunn M."/>
            <person name="Durbin K.J."/>
            <person name="Dutta I."/>
            <person name="Eades T."/>
            <person name="Ellwood M."/>
            <person name="Emery-Cohen A."/>
            <person name="Errington H."/>
            <person name="Evans K.L."/>
            <person name="Faulkner L."/>
            <person name="Francis F."/>
            <person name="Frankland J."/>
            <person name="Fraser A.E."/>
            <person name="Galgoczy P."/>
            <person name="Gilbert J."/>
            <person name="Gill R."/>
            <person name="Gloeckner G."/>
            <person name="Gregory S.G."/>
            <person name="Gribble S."/>
            <person name="Griffiths C."/>
            <person name="Grocock R."/>
            <person name="Gu Y."/>
            <person name="Gwilliam R."/>
            <person name="Hamilton C."/>
            <person name="Hart E.A."/>
            <person name="Hawes A."/>
            <person name="Heath P.D."/>
            <person name="Heitmann K."/>
            <person name="Hennig S."/>
            <person name="Hernandez J."/>
            <person name="Hinzmann B."/>
            <person name="Ho S."/>
            <person name="Hoffs M."/>
            <person name="Howden P.J."/>
            <person name="Huckle E.J."/>
            <person name="Hume J."/>
            <person name="Hunt P.J."/>
            <person name="Hunt A.R."/>
            <person name="Isherwood J."/>
            <person name="Jacob L."/>
            <person name="Johnson D."/>
            <person name="Jones S."/>
            <person name="de Jong P.J."/>
            <person name="Joseph S.S."/>
            <person name="Keenan S."/>
            <person name="Kelly S."/>
            <person name="Kershaw J.K."/>
            <person name="Khan Z."/>
            <person name="Kioschis P."/>
            <person name="Klages S."/>
            <person name="Knights A.J."/>
            <person name="Kosiura A."/>
            <person name="Kovar-Smith C."/>
            <person name="Laird G.K."/>
            <person name="Langford C."/>
            <person name="Lawlor S."/>
            <person name="Leversha M."/>
            <person name="Lewis L."/>
            <person name="Liu W."/>
            <person name="Lloyd C."/>
            <person name="Lloyd D.M."/>
            <person name="Loulseged H."/>
            <person name="Loveland J.E."/>
            <person name="Lovell J.D."/>
            <person name="Lozado R."/>
            <person name="Lu J."/>
            <person name="Lyne R."/>
            <person name="Ma J."/>
            <person name="Maheshwari M."/>
            <person name="Matthews L.H."/>
            <person name="McDowall J."/>
            <person name="McLaren S."/>
            <person name="McMurray A."/>
            <person name="Meidl P."/>
            <person name="Meitinger T."/>
            <person name="Milne S."/>
            <person name="Miner G."/>
            <person name="Mistry S.L."/>
            <person name="Morgan M."/>
            <person name="Morris S."/>
            <person name="Mueller I."/>
            <person name="Mullikin J.C."/>
            <person name="Nguyen N."/>
            <person name="Nordsiek G."/>
            <person name="Nyakatura G."/>
            <person name="O'dell C.N."/>
            <person name="Okwuonu G."/>
            <person name="Palmer S."/>
            <person name="Pandian R."/>
            <person name="Parker D."/>
            <person name="Parrish J."/>
            <person name="Pasternak S."/>
            <person name="Patel D."/>
            <person name="Pearce A.V."/>
            <person name="Pearson D.M."/>
            <person name="Pelan S.E."/>
            <person name="Perez L."/>
            <person name="Porter K.M."/>
            <person name="Ramsey Y."/>
            <person name="Reichwald K."/>
            <person name="Rhodes S."/>
            <person name="Ridler K.A."/>
            <person name="Schlessinger D."/>
            <person name="Schueler M.G."/>
            <person name="Sehra H.K."/>
            <person name="Shaw-Smith C."/>
            <person name="Shen H."/>
            <person name="Sheridan E.M."/>
            <person name="Shownkeen R."/>
            <person name="Skuce C.D."/>
            <person name="Smith M.L."/>
            <person name="Sotheran E.C."/>
            <person name="Steingruber H.E."/>
            <person name="Steward C.A."/>
            <person name="Storey R."/>
            <person name="Swann R.M."/>
            <person name="Swarbreck D."/>
            <person name="Tabor P.E."/>
            <person name="Taudien S."/>
            <person name="Taylor T."/>
            <person name="Teague B."/>
            <person name="Thomas K."/>
            <person name="Thorpe A."/>
            <person name="Timms K."/>
            <person name="Tracey A."/>
            <person name="Trevanion S."/>
            <person name="Tromans A.C."/>
            <person name="d'Urso M."/>
            <person name="Verduzco D."/>
            <person name="Villasana D."/>
            <person name="Waldron L."/>
            <person name="Wall M."/>
            <person name="Wang Q."/>
            <person name="Warren J."/>
            <person name="Warry G.L."/>
            <person name="Wei X."/>
            <person name="West A."/>
            <person name="Whitehead S.L."/>
            <person name="Whiteley M.N."/>
            <person name="Wilkinson J.E."/>
            <person name="Willey D.L."/>
            <person name="Williams G."/>
            <person name="Williams L."/>
            <person name="Williamson A."/>
            <person name="Williamson H."/>
            <person name="Wilming L."/>
            <person name="Woodmansey R.L."/>
            <person name="Wray P.W."/>
            <person name="Yen J."/>
            <person name="Zhang J."/>
            <person name="Zhou J."/>
            <person name="Zoghbi H."/>
            <person name="Zorilla S."/>
            <person name="Buck D."/>
            <person name="Reinhardt R."/>
            <person name="Poustka A."/>
            <person name="Rosenthal A."/>
            <person name="Lehrach H."/>
            <person name="Meindl A."/>
            <person name="Minx P.J."/>
            <person name="Hillier L.W."/>
            <person name="Willard H.F."/>
            <person name="Wilson R.K."/>
            <person name="Waterston R.H."/>
            <person name="Rice C.M."/>
            <person name="Vaudin M."/>
            <person name="Coulson A."/>
            <person name="Nelson D.L."/>
            <person name="Weinstock G."/>
            <person name="Sulston J.E."/>
            <person name="Durbin R.M."/>
            <person name="Hubbard T."/>
            <person name="Gibbs R.A."/>
            <person name="Beck S."/>
            <person name="Rogers J."/>
            <person name="Bentley D.R."/>
        </authorList>
    </citation>
    <scope>NUCLEOTIDE SEQUENCE [LARGE SCALE GENOMIC DNA]</scope>
</reference>
<evidence type="ECO:0000250" key="1">
    <source>
        <dbReference type="UniProtKB" id="P10961"/>
    </source>
</evidence>
<evidence type="ECO:0000256" key="2">
    <source>
        <dbReference type="SAM" id="MobiDB-lite"/>
    </source>
</evidence>
<evidence type="ECO:0000305" key="3"/>
<evidence type="ECO:0000312" key="4">
    <source>
        <dbReference type="HGNC" id="HGNC:52398"/>
    </source>
</evidence>
<proteinExistence type="inferred from homology"/>